<comment type="function">
    <text evidence="1">Catalyzes the condensation of ATP and 5-phosphoribose 1-diphosphate to form N'-(5'-phosphoribosyl)-ATP (PR-ATP). Has a crucial role in the pathway because the rate of histidine biosynthesis seems to be controlled primarily by regulation of HisG enzymatic activity.</text>
</comment>
<comment type="catalytic activity">
    <reaction evidence="1">
        <text>1-(5-phospho-beta-D-ribosyl)-ATP + diphosphate = 5-phospho-alpha-D-ribose 1-diphosphate + ATP</text>
        <dbReference type="Rhea" id="RHEA:18473"/>
        <dbReference type="ChEBI" id="CHEBI:30616"/>
        <dbReference type="ChEBI" id="CHEBI:33019"/>
        <dbReference type="ChEBI" id="CHEBI:58017"/>
        <dbReference type="ChEBI" id="CHEBI:73183"/>
        <dbReference type="EC" id="2.4.2.17"/>
    </reaction>
</comment>
<comment type="pathway">
    <text evidence="1">Amino-acid biosynthesis; L-histidine biosynthesis; L-histidine from 5-phospho-alpha-D-ribose 1-diphosphate: step 1/9.</text>
</comment>
<comment type="subunit">
    <text evidence="1">Heteromultimer composed of HisG and HisZ subunits.</text>
</comment>
<comment type="subcellular location">
    <subcellularLocation>
        <location evidence="1">Cytoplasm</location>
    </subcellularLocation>
</comment>
<comment type="domain">
    <text>Lacks the C-terminal regulatory region which is replaced by HisZ.</text>
</comment>
<comment type="similarity">
    <text evidence="1">Belongs to the ATP phosphoribosyltransferase family. Short subfamily.</text>
</comment>
<reference key="1">
    <citation type="submission" date="2006-11" db="EMBL/GenBank/DDBJ databases">
        <title>Sequence of Campylobacter fetus subsp. fetus 82-40.</title>
        <authorList>
            <person name="Fouts D.E."/>
            <person name="Nelson K.E."/>
        </authorList>
    </citation>
    <scope>NUCLEOTIDE SEQUENCE [LARGE SCALE GENOMIC DNA]</scope>
    <source>
        <strain>82-40</strain>
    </source>
</reference>
<name>HIS1_CAMFF</name>
<gene>
    <name evidence="1" type="primary">hisG</name>
    <name type="ordered locus">CFF8240_1151</name>
</gene>
<organism>
    <name type="scientific">Campylobacter fetus subsp. fetus (strain 82-40)</name>
    <dbReference type="NCBI Taxonomy" id="360106"/>
    <lineage>
        <taxon>Bacteria</taxon>
        <taxon>Pseudomonadati</taxon>
        <taxon>Campylobacterota</taxon>
        <taxon>Epsilonproteobacteria</taxon>
        <taxon>Campylobacterales</taxon>
        <taxon>Campylobacteraceae</taxon>
        <taxon>Campylobacter</taxon>
    </lineage>
</organism>
<keyword id="KW-0028">Amino-acid biosynthesis</keyword>
<keyword id="KW-0067">ATP-binding</keyword>
<keyword id="KW-0963">Cytoplasm</keyword>
<keyword id="KW-0328">Glycosyltransferase</keyword>
<keyword id="KW-0368">Histidine biosynthesis</keyword>
<keyword id="KW-0547">Nucleotide-binding</keyword>
<keyword id="KW-0808">Transferase</keyword>
<proteinExistence type="inferred from homology"/>
<evidence type="ECO:0000255" key="1">
    <source>
        <dbReference type="HAMAP-Rule" id="MF_01018"/>
    </source>
</evidence>
<feature type="chain" id="PRO_1000063279" description="ATP phosphoribosyltransferase">
    <location>
        <begin position="1"/>
        <end position="203"/>
    </location>
</feature>
<accession>A0RQ26</accession>
<sequence>MLTVALPKGRIADETLNIFSKIFNDEFKFEDRKLTMIKDNFEFLMVRNQDIPTYVTEGAADIGVVGLDVLEEHNCDVLRLLNLKLGKCKVCIGIKNSDTLDYTKPELKIATKMPNITKNYFASKAVAAKIIKLYGSIELAPIVGLSDAIVDIVETGTTMKQNGLKVADIIMESSAHLIANKNSFITKRDEILSLYHKINSVIN</sequence>
<dbReference type="EC" id="2.4.2.17" evidence="1"/>
<dbReference type="EMBL" id="CP000487">
    <property type="protein sequence ID" value="ABK82757.1"/>
    <property type="molecule type" value="Genomic_DNA"/>
</dbReference>
<dbReference type="RefSeq" id="WP_010400265.1">
    <property type="nucleotide sequence ID" value="NC_008599.1"/>
</dbReference>
<dbReference type="SMR" id="A0RQ26"/>
<dbReference type="GeneID" id="61064976"/>
<dbReference type="KEGG" id="cff:CFF8240_1151"/>
<dbReference type="eggNOG" id="COG0040">
    <property type="taxonomic scope" value="Bacteria"/>
</dbReference>
<dbReference type="HOGENOM" id="CLU_038115_2_0_7"/>
<dbReference type="UniPathway" id="UPA00031">
    <property type="reaction ID" value="UER00006"/>
</dbReference>
<dbReference type="Proteomes" id="UP000000760">
    <property type="component" value="Chromosome"/>
</dbReference>
<dbReference type="GO" id="GO:0005737">
    <property type="term" value="C:cytoplasm"/>
    <property type="evidence" value="ECO:0007669"/>
    <property type="project" value="UniProtKB-SubCell"/>
</dbReference>
<dbReference type="GO" id="GO:0005524">
    <property type="term" value="F:ATP binding"/>
    <property type="evidence" value="ECO:0007669"/>
    <property type="project" value="UniProtKB-KW"/>
</dbReference>
<dbReference type="GO" id="GO:0003879">
    <property type="term" value="F:ATP phosphoribosyltransferase activity"/>
    <property type="evidence" value="ECO:0007669"/>
    <property type="project" value="UniProtKB-UniRule"/>
</dbReference>
<dbReference type="GO" id="GO:0000105">
    <property type="term" value="P:L-histidine biosynthetic process"/>
    <property type="evidence" value="ECO:0007669"/>
    <property type="project" value="UniProtKB-UniRule"/>
</dbReference>
<dbReference type="CDD" id="cd13595">
    <property type="entry name" value="PBP2_HisGs"/>
    <property type="match status" value="1"/>
</dbReference>
<dbReference type="FunFam" id="3.40.190.10:FF:000008">
    <property type="entry name" value="ATP phosphoribosyltransferase"/>
    <property type="match status" value="1"/>
</dbReference>
<dbReference type="Gene3D" id="3.40.190.10">
    <property type="entry name" value="Periplasmic binding protein-like II"/>
    <property type="match status" value="2"/>
</dbReference>
<dbReference type="HAMAP" id="MF_01018">
    <property type="entry name" value="HisG_Short"/>
    <property type="match status" value="1"/>
</dbReference>
<dbReference type="InterPro" id="IPR013820">
    <property type="entry name" value="ATP_PRibTrfase_cat"/>
</dbReference>
<dbReference type="InterPro" id="IPR018198">
    <property type="entry name" value="ATP_PRibTrfase_CS"/>
</dbReference>
<dbReference type="InterPro" id="IPR001348">
    <property type="entry name" value="ATP_PRibTrfase_HisG"/>
</dbReference>
<dbReference type="InterPro" id="IPR024893">
    <property type="entry name" value="ATP_PRibTrfase_HisG_short"/>
</dbReference>
<dbReference type="NCBIfam" id="TIGR00070">
    <property type="entry name" value="hisG"/>
    <property type="match status" value="1"/>
</dbReference>
<dbReference type="PANTHER" id="PTHR21403:SF8">
    <property type="entry name" value="ATP PHOSPHORIBOSYLTRANSFERASE"/>
    <property type="match status" value="1"/>
</dbReference>
<dbReference type="PANTHER" id="PTHR21403">
    <property type="entry name" value="ATP PHOSPHORIBOSYLTRANSFERASE ATP-PRTASE"/>
    <property type="match status" value="1"/>
</dbReference>
<dbReference type="Pfam" id="PF01634">
    <property type="entry name" value="HisG"/>
    <property type="match status" value="1"/>
</dbReference>
<dbReference type="SUPFAM" id="SSF53850">
    <property type="entry name" value="Periplasmic binding protein-like II"/>
    <property type="match status" value="1"/>
</dbReference>
<dbReference type="PROSITE" id="PS01316">
    <property type="entry name" value="ATP_P_PHORIBOSYLTR"/>
    <property type="match status" value="1"/>
</dbReference>
<protein>
    <recommendedName>
        <fullName evidence="1">ATP phosphoribosyltransferase</fullName>
        <shortName evidence="1">ATP-PRT</shortName>
        <shortName evidence="1">ATP-PRTase</shortName>
        <ecNumber evidence="1">2.4.2.17</ecNumber>
    </recommendedName>
</protein>